<accession>B1IPY0</accession>
<protein>
    <recommendedName>
        <fullName evidence="1">Large ribosomal subunit protein uL4</fullName>
    </recommendedName>
    <alternativeName>
        <fullName evidence="3">50S ribosomal protein L4</fullName>
    </alternativeName>
</protein>
<feature type="chain" id="PRO_1000086519" description="Large ribosomal subunit protein uL4">
    <location>
        <begin position="1"/>
        <end position="201"/>
    </location>
</feature>
<feature type="region of interest" description="Disordered" evidence="2">
    <location>
        <begin position="44"/>
        <end position="71"/>
    </location>
</feature>
<organism>
    <name type="scientific">Escherichia coli (strain ATCC 8739 / DSM 1576 / NBRC 3972 / NCIMB 8545 / WDCM 00012 / Crooks)</name>
    <dbReference type="NCBI Taxonomy" id="481805"/>
    <lineage>
        <taxon>Bacteria</taxon>
        <taxon>Pseudomonadati</taxon>
        <taxon>Pseudomonadota</taxon>
        <taxon>Gammaproteobacteria</taxon>
        <taxon>Enterobacterales</taxon>
        <taxon>Enterobacteriaceae</taxon>
        <taxon>Escherichia</taxon>
    </lineage>
</organism>
<gene>
    <name evidence="1" type="primary">rplD</name>
    <name type="ordered locus">EcolC_0394</name>
</gene>
<proteinExistence type="inferred from homology"/>
<reference key="1">
    <citation type="submission" date="2008-02" db="EMBL/GenBank/DDBJ databases">
        <title>Complete sequence of Escherichia coli C str. ATCC 8739.</title>
        <authorList>
            <person name="Copeland A."/>
            <person name="Lucas S."/>
            <person name="Lapidus A."/>
            <person name="Glavina del Rio T."/>
            <person name="Dalin E."/>
            <person name="Tice H."/>
            <person name="Bruce D."/>
            <person name="Goodwin L."/>
            <person name="Pitluck S."/>
            <person name="Kiss H."/>
            <person name="Brettin T."/>
            <person name="Detter J.C."/>
            <person name="Han C."/>
            <person name="Kuske C.R."/>
            <person name="Schmutz J."/>
            <person name="Larimer F."/>
            <person name="Land M."/>
            <person name="Hauser L."/>
            <person name="Kyrpides N."/>
            <person name="Mikhailova N."/>
            <person name="Ingram L."/>
            <person name="Richardson P."/>
        </authorList>
    </citation>
    <scope>NUCLEOTIDE SEQUENCE [LARGE SCALE GENOMIC DNA]</scope>
    <source>
        <strain>ATCC 8739 / DSM 1576 / NBRC 3972 / NCIMB 8545 / WDCM 00012 / Crooks</strain>
    </source>
</reference>
<evidence type="ECO:0000255" key="1">
    <source>
        <dbReference type="HAMAP-Rule" id="MF_01328"/>
    </source>
</evidence>
<evidence type="ECO:0000256" key="2">
    <source>
        <dbReference type="SAM" id="MobiDB-lite"/>
    </source>
</evidence>
<evidence type="ECO:0000305" key="3"/>
<dbReference type="EMBL" id="CP000946">
    <property type="protein sequence ID" value="ACA76072.1"/>
    <property type="molecule type" value="Genomic_DNA"/>
</dbReference>
<dbReference type="RefSeq" id="WP_000424395.1">
    <property type="nucleotide sequence ID" value="NZ_MTFT01000014.1"/>
</dbReference>
<dbReference type="SMR" id="B1IPY0"/>
<dbReference type="GeneID" id="97442859"/>
<dbReference type="KEGG" id="ecl:EcolC_0394"/>
<dbReference type="HOGENOM" id="CLU_041575_5_2_6"/>
<dbReference type="GO" id="GO:1990904">
    <property type="term" value="C:ribonucleoprotein complex"/>
    <property type="evidence" value="ECO:0007669"/>
    <property type="project" value="UniProtKB-KW"/>
</dbReference>
<dbReference type="GO" id="GO:0005840">
    <property type="term" value="C:ribosome"/>
    <property type="evidence" value="ECO:0007669"/>
    <property type="project" value="UniProtKB-KW"/>
</dbReference>
<dbReference type="GO" id="GO:0019843">
    <property type="term" value="F:rRNA binding"/>
    <property type="evidence" value="ECO:0007669"/>
    <property type="project" value="UniProtKB-UniRule"/>
</dbReference>
<dbReference type="GO" id="GO:0003735">
    <property type="term" value="F:structural constituent of ribosome"/>
    <property type="evidence" value="ECO:0007669"/>
    <property type="project" value="InterPro"/>
</dbReference>
<dbReference type="GO" id="GO:0006412">
    <property type="term" value="P:translation"/>
    <property type="evidence" value="ECO:0007669"/>
    <property type="project" value="UniProtKB-UniRule"/>
</dbReference>
<dbReference type="FunFam" id="3.40.1370.10:FF:000001">
    <property type="entry name" value="50S ribosomal protein L4"/>
    <property type="match status" value="1"/>
</dbReference>
<dbReference type="Gene3D" id="3.40.1370.10">
    <property type="match status" value="1"/>
</dbReference>
<dbReference type="HAMAP" id="MF_01328_B">
    <property type="entry name" value="Ribosomal_uL4_B"/>
    <property type="match status" value="1"/>
</dbReference>
<dbReference type="InterPro" id="IPR002136">
    <property type="entry name" value="Ribosomal_uL4"/>
</dbReference>
<dbReference type="InterPro" id="IPR013005">
    <property type="entry name" value="Ribosomal_uL4-like"/>
</dbReference>
<dbReference type="InterPro" id="IPR023574">
    <property type="entry name" value="Ribosomal_uL4_dom_sf"/>
</dbReference>
<dbReference type="NCBIfam" id="TIGR03953">
    <property type="entry name" value="rplD_bact"/>
    <property type="match status" value="1"/>
</dbReference>
<dbReference type="PANTHER" id="PTHR10746">
    <property type="entry name" value="50S RIBOSOMAL PROTEIN L4"/>
    <property type="match status" value="1"/>
</dbReference>
<dbReference type="PANTHER" id="PTHR10746:SF6">
    <property type="entry name" value="LARGE RIBOSOMAL SUBUNIT PROTEIN UL4M"/>
    <property type="match status" value="1"/>
</dbReference>
<dbReference type="Pfam" id="PF00573">
    <property type="entry name" value="Ribosomal_L4"/>
    <property type="match status" value="1"/>
</dbReference>
<dbReference type="SUPFAM" id="SSF52166">
    <property type="entry name" value="Ribosomal protein L4"/>
    <property type="match status" value="1"/>
</dbReference>
<sequence>MELVLKDAQSALTVSETTFGRDFNEALVHQVVVAYAAGARQGTRAQKTRAEVTGSGKKPWRQKGTGRARSGSIKSPIWRSGGVTFAARPQDHSQKVNKKMYRGALKSILSELVRQDRLIVVEKFSVEAPKTKLLAQKLKDMALEDVLIITGELDENLFLAARNLHKVDVRDATGIDPVSLIAFDKVVMTADAVKQVEEMLA</sequence>
<comment type="function">
    <text evidence="1">One of the primary rRNA binding proteins, this protein initially binds near the 5'-end of the 23S rRNA. It is important during the early stages of 50S assembly. It makes multiple contacts with different domains of the 23S rRNA in the assembled 50S subunit and ribosome.</text>
</comment>
<comment type="function">
    <text evidence="1">Forms part of the polypeptide exit tunnel.</text>
</comment>
<comment type="subunit">
    <text evidence="1">Part of the 50S ribosomal subunit.</text>
</comment>
<comment type="similarity">
    <text evidence="1">Belongs to the universal ribosomal protein uL4 family.</text>
</comment>
<name>RL4_ECOLC</name>
<keyword id="KW-0687">Ribonucleoprotein</keyword>
<keyword id="KW-0689">Ribosomal protein</keyword>
<keyword id="KW-0694">RNA-binding</keyword>
<keyword id="KW-0699">rRNA-binding</keyword>